<proteinExistence type="inferred from homology"/>
<sequence length="357" mass="39030">MAAPVQTIDVLLAEHADLERALADPELHSRPDEARKAGRRFARLAPIVATYRKLVAAREDLETAHELAATDESFAAEAAELEARVAELDSQLTDMLAPRDPHDADDIVLEVKSGEGGEESALFAADLARMYIRYAERHGWTVTVLGETTSDLGGYKDATLAIASKGDTADGVWSRMKFEGGVHRVQRVPVTESQGRVHTSAAGVLVYPEPEEVGEVQIDESDLRIDVYRSSGKGGQGVNTTDSAVRITHLPTGIVVTCQNERSQLQNKIRAMQVLGARLQAIAEEQAMADASADRASQIRTVDRSERIRTYNFPENRITDHRIGYKSHNLDQVLDGDLDALFDALAAADKQARLQQP</sequence>
<organism>
    <name type="scientific">Mycobacterium marinum (strain ATCC BAA-535 / M)</name>
    <dbReference type="NCBI Taxonomy" id="216594"/>
    <lineage>
        <taxon>Bacteria</taxon>
        <taxon>Bacillati</taxon>
        <taxon>Actinomycetota</taxon>
        <taxon>Actinomycetes</taxon>
        <taxon>Mycobacteriales</taxon>
        <taxon>Mycobacteriaceae</taxon>
        <taxon>Mycobacterium</taxon>
        <taxon>Mycobacterium ulcerans group</taxon>
    </lineage>
</organism>
<evidence type="ECO:0000255" key="1">
    <source>
        <dbReference type="HAMAP-Rule" id="MF_00093"/>
    </source>
</evidence>
<dbReference type="EMBL" id="CP000854">
    <property type="protein sequence ID" value="ACC42505.1"/>
    <property type="molecule type" value="Genomic_DNA"/>
</dbReference>
<dbReference type="RefSeq" id="WP_012395680.1">
    <property type="nucleotide sequence ID" value="NC_010612.1"/>
</dbReference>
<dbReference type="SMR" id="B2HQL3"/>
<dbReference type="STRING" id="216594.MMAR_4098"/>
<dbReference type="KEGG" id="mmi:MMAR_4098"/>
<dbReference type="eggNOG" id="COG0216">
    <property type="taxonomic scope" value="Bacteria"/>
</dbReference>
<dbReference type="HOGENOM" id="CLU_036856_0_1_11"/>
<dbReference type="OrthoDB" id="9806673at2"/>
<dbReference type="Proteomes" id="UP000001190">
    <property type="component" value="Chromosome"/>
</dbReference>
<dbReference type="GO" id="GO:0005737">
    <property type="term" value="C:cytoplasm"/>
    <property type="evidence" value="ECO:0007669"/>
    <property type="project" value="UniProtKB-SubCell"/>
</dbReference>
<dbReference type="GO" id="GO:0016149">
    <property type="term" value="F:translation release factor activity, codon specific"/>
    <property type="evidence" value="ECO:0007669"/>
    <property type="project" value="UniProtKB-UniRule"/>
</dbReference>
<dbReference type="FunFam" id="3.30.160.20:FF:000004">
    <property type="entry name" value="Peptide chain release factor 1"/>
    <property type="match status" value="1"/>
</dbReference>
<dbReference type="Gene3D" id="3.30.160.20">
    <property type="match status" value="1"/>
</dbReference>
<dbReference type="Gene3D" id="3.30.70.1660">
    <property type="match status" value="1"/>
</dbReference>
<dbReference type="Gene3D" id="6.10.140.1950">
    <property type="match status" value="1"/>
</dbReference>
<dbReference type="HAMAP" id="MF_00093">
    <property type="entry name" value="Rel_fac_1"/>
    <property type="match status" value="1"/>
</dbReference>
<dbReference type="InterPro" id="IPR005139">
    <property type="entry name" value="PCRF"/>
</dbReference>
<dbReference type="InterPro" id="IPR000352">
    <property type="entry name" value="Pep_chain_release_fac_I"/>
</dbReference>
<dbReference type="InterPro" id="IPR045853">
    <property type="entry name" value="Pep_chain_release_fac_I_sf"/>
</dbReference>
<dbReference type="InterPro" id="IPR050057">
    <property type="entry name" value="Prokaryotic/Mito_RF"/>
</dbReference>
<dbReference type="InterPro" id="IPR004373">
    <property type="entry name" value="RF-1"/>
</dbReference>
<dbReference type="NCBIfam" id="TIGR00019">
    <property type="entry name" value="prfA"/>
    <property type="match status" value="1"/>
</dbReference>
<dbReference type="NCBIfam" id="NF001859">
    <property type="entry name" value="PRK00591.1"/>
    <property type="match status" value="1"/>
</dbReference>
<dbReference type="PANTHER" id="PTHR43804">
    <property type="entry name" value="LD18447P"/>
    <property type="match status" value="1"/>
</dbReference>
<dbReference type="PANTHER" id="PTHR43804:SF7">
    <property type="entry name" value="LD18447P"/>
    <property type="match status" value="1"/>
</dbReference>
<dbReference type="Pfam" id="PF03462">
    <property type="entry name" value="PCRF"/>
    <property type="match status" value="1"/>
</dbReference>
<dbReference type="Pfam" id="PF00472">
    <property type="entry name" value="RF-1"/>
    <property type="match status" value="1"/>
</dbReference>
<dbReference type="SMART" id="SM00937">
    <property type="entry name" value="PCRF"/>
    <property type="match status" value="1"/>
</dbReference>
<dbReference type="SUPFAM" id="SSF75620">
    <property type="entry name" value="Release factor"/>
    <property type="match status" value="1"/>
</dbReference>
<dbReference type="PROSITE" id="PS00745">
    <property type="entry name" value="RF_PROK_I"/>
    <property type="match status" value="1"/>
</dbReference>
<reference key="1">
    <citation type="journal article" date="2008" name="Genome Res.">
        <title>Insights from the complete genome sequence of Mycobacterium marinum on the evolution of Mycobacterium tuberculosis.</title>
        <authorList>
            <person name="Stinear T.P."/>
            <person name="Seemann T."/>
            <person name="Harrison P.F."/>
            <person name="Jenkin G.A."/>
            <person name="Davies J.K."/>
            <person name="Johnson P.D."/>
            <person name="Abdellah Z."/>
            <person name="Arrowsmith C."/>
            <person name="Chillingworth T."/>
            <person name="Churcher C."/>
            <person name="Clarke K."/>
            <person name="Cronin A."/>
            <person name="Davis P."/>
            <person name="Goodhead I."/>
            <person name="Holroyd N."/>
            <person name="Jagels K."/>
            <person name="Lord A."/>
            <person name="Moule S."/>
            <person name="Mungall K."/>
            <person name="Norbertczak H."/>
            <person name="Quail M.A."/>
            <person name="Rabbinowitsch E."/>
            <person name="Walker D."/>
            <person name="White B."/>
            <person name="Whitehead S."/>
            <person name="Small P.L."/>
            <person name="Brosch R."/>
            <person name="Ramakrishnan L."/>
            <person name="Fischbach M.A."/>
            <person name="Parkhill J."/>
            <person name="Cole S.T."/>
        </authorList>
    </citation>
    <scope>NUCLEOTIDE SEQUENCE [LARGE SCALE GENOMIC DNA]</scope>
    <source>
        <strain>ATCC BAA-535 / M</strain>
    </source>
</reference>
<gene>
    <name evidence="1" type="primary">prfA</name>
    <name type="ordered locus">MMAR_4098</name>
</gene>
<protein>
    <recommendedName>
        <fullName evidence="1">Peptide chain release factor 1</fullName>
        <shortName evidence="1">RF-1</shortName>
    </recommendedName>
</protein>
<comment type="function">
    <text evidence="1">Peptide chain release factor 1 directs the termination of translation in response to the peptide chain termination codons UAG and UAA.</text>
</comment>
<comment type="subcellular location">
    <subcellularLocation>
        <location evidence="1">Cytoplasm</location>
    </subcellularLocation>
</comment>
<comment type="PTM">
    <text evidence="1">Methylated by PrmC. Methylation increases the termination efficiency of RF1.</text>
</comment>
<comment type="similarity">
    <text evidence="1">Belongs to the prokaryotic/mitochondrial release factor family.</text>
</comment>
<name>RF1_MYCMM</name>
<keyword id="KW-0963">Cytoplasm</keyword>
<keyword id="KW-0488">Methylation</keyword>
<keyword id="KW-0648">Protein biosynthesis</keyword>
<keyword id="KW-1185">Reference proteome</keyword>
<feature type="chain" id="PRO_1000093477" description="Peptide chain release factor 1">
    <location>
        <begin position="1"/>
        <end position="357"/>
    </location>
</feature>
<feature type="modified residue" description="N5-methylglutamine" evidence="1">
    <location>
        <position position="236"/>
    </location>
</feature>
<accession>B2HQL3</accession>